<proteinExistence type="inferred from homology"/>
<keyword id="KW-0965">Cell junction</keyword>
<keyword id="KW-1003">Cell membrane</keyword>
<keyword id="KW-0303">Gap junction</keyword>
<keyword id="KW-0407">Ion channel</keyword>
<keyword id="KW-0406">Ion transport</keyword>
<keyword id="KW-0472">Membrane</keyword>
<keyword id="KW-1185">Reference proteome</keyword>
<keyword id="KW-0812">Transmembrane</keyword>
<keyword id="KW-1133">Transmembrane helix</keyword>
<keyword id="KW-0813">Transport</keyword>
<evidence type="ECO:0000250" key="1"/>
<evidence type="ECO:0000250" key="2">
    <source>
        <dbReference type="UniProtKB" id="O61715"/>
    </source>
</evidence>
<evidence type="ECO:0000255" key="3">
    <source>
        <dbReference type="PROSITE-ProRule" id="PRU00351"/>
    </source>
</evidence>
<evidence type="ECO:0000305" key="4"/>
<dbReference type="EMBL" id="Z68302">
    <property type="protein sequence ID" value="CAA92633.2"/>
    <property type="molecule type" value="Genomic_DNA"/>
</dbReference>
<dbReference type="PIR" id="T27993">
    <property type="entry name" value="T27993"/>
</dbReference>
<dbReference type="RefSeq" id="NP_502209.1">
    <property type="nucleotide sequence ID" value="NM_069808.7"/>
</dbReference>
<dbReference type="SMR" id="Q23593"/>
<dbReference type="BioGRID" id="43196">
    <property type="interactions" value="3"/>
</dbReference>
<dbReference type="FunCoup" id="Q23593">
    <property type="interactions" value="200"/>
</dbReference>
<dbReference type="IntAct" id="Q23593">
    <property type="interactions" value="2"/>
</dbReference>
<dbReference type="STRING" id="6239.ZK792.2.1"/>
<dbReference type="PaxDb" id="6239-ZK792.2.3"/>
<dbReference type="PeptideAtlas" id="Q23593"/>
<dbReference type="EnsemblMetazoa" id="ZK792.2.1">
    <property type="protein sequence ID" value="ZK792.2.1"/>
    <property type="gene ID" value="WBGene00002130"/>
</dbReference>
<dbReference type="GeneID" id="178101"/>
<dbReference type="KEGG" id="cel:CELE_ZK792.2"/>
<dbReference type="UCSC" id="ZK792.2.1">
    <property type="organism name" value="c. elegans"/>
</dbReference>
<dbReference type="AGR" id="WB:WBGene00002130"/>
<dbReference type="CTD" id="178101"/>
<dbReference type="WormBase" id="ZK792.2">
    <property type="protein sequence ID" value="CE27419"/>
    <property type="gene ID" value="WBGene00002130"/>
    <property type="gene designation" value="inx-8"/>
</dbReference>
<dbReference type="eggNOG" id="KOG3883">
    <property type="taxonomic scope" value="Eukaryota"/>
</dbReference>
<dbReference type="GeneTree" id="ENSGT00940000174424"/>
<dbReference type="HOGENOM" id="CLU_035763_0_1_1"/>
<dbReference type="InParanoid" id="Q23593"/>
<dbReference type="OMA" id="SDIPEYH"/>
<dbReference type="OrthoDB" id="5790380at2759"/>
<dbReference type="PhylomeDB" id="Q23593"/>
<dbReference type="PRO" id="PR:Q23593"/>
<dbReference type="Proteomes" id="UP000001940">
    <property type="component" value="Chromosome IV"/>
</dbReference>
<dbReference type="Bgee" id="WBGene00002130">
    <property type="expression patterns" value="Expressed in adult organism and 2 other cell types or tissues"/>
</dbReference>
<dbReference type="GO" id="GO:0005921">
    <property type="term" value="C:gap junction"/>
    <property type="evidence" value="ECO:0000314"/>
    <property type="project" value="WormBase"/>
</dbReference>
<dbReference type="GO" id="GO:0005886">
    <property type="term" value="C:plasma membrane"/>
    <property type="evidence" value="ECO:0000250"/>
    <property type="project" value="UniProtKB"/>
</dbReference>
<dbReference type="GO" id="GO:0005243">
    <property type="term" value="F:gap junction channel activity"/>
    <property type="evidence" value="ECO:0000250"/>
    <property type="project" value="UniProtKB"/>
</dbReference>
<dbReference type="GO" id="GO:0055077">
    <property type="term" value="F:gap junction hemi-channel activity"/>
    <property type="evidence" value="ECO:0000250"/>
    <property type="project" value="UniProtKB"/>
</dbReference>
<dbReference type="GO" id="GO:0036093">
    <property type="term" value="P:germ cell proliferation"/>
    <property type="evidence" value="ECO:0000316"/>
    <property type="project" value="WormBase"/>
</dbReference>
<dbReference type="GO" id="GO:0034220">
    <property type="term" value="P:monoatomic ion transmembrane transport"/>
    <property type="evidence" value="ECO:0007669"/>
    <property type="project" value="UniProtKB-KW"/>
</dbReference>
<dbReference type="InterPro" id="IPR000990">
    <property type="entry name" value="Innexin"/>
</dbReference>
<dbReference type="PANTHER" id="PTHR11893">
    <property type="entry name" value="INNEXIN"/>
    <property type="match status" value="1"/>
</dbReference>
<dbReference type="PANTHER" id="PTHR11893:SF15">
    <property type="entry name" value="INNEXIN-RELATED"/>
    <property type="match status" value="1"/>
</dbReference>
<dbReference type="Pfam" id="PF00876">
    <property type="entry name" value="Innexin"/>
    <property type="match status" value="1"/>
</dbReference>
<dbReference type="PRINTS" id="PR01262">
    <property type="entry name" value="INNEXIN"/>
</dbReference>
<dbReference type="PROSITE" id="PS51013">
    <property type="entry name" value="PANNEXIN"/>
    <property type="match status" value="1"/>
</dbReference>
<comment type="function">
    <text evidence="2">Structural component of the gap junctions.</text>
</comment>
<comment type="subcellular location">
    <subcellularLocation>
        <location evidence="4">Cell membrane</location>
        <topology evidence="3">Multi-pass membrane protein</topology>
    </subcellularLocation>
    <subcellularLocation>
        <location evidence="1">Cell junction</location>
        <location evidence="1">Gap junction</location>
    </subcellularLocation>
</comment>
<comment type="similarity">
    <text evidence="3">Belongs to the pannexin family.</text>
</comment>
<protein>
    <recommendedName>
        <fullName>Innexin-8</fullName>
    </recommendedName>
    <alternativeName>
        <fullName>Protein opu-8</fullName>
    </alternativeName>
</protein>
<accession>Q23593</accession>
<reference key="1">
    <citation type="journal article" date="1998" name="Science">
        <title>Genome sequence of the nematode C. elegans: a platform for investigating biology.</title>
        <authorList>
            <consortium name="The C. elegans sequencing consortium"/>
        </authorList>
    </citation>
    <scope>NUCLEOTIDE SEQUENCE [LARGE SCALE GENOMIC DNA]</scope>
    <source>
        <strain>Bristol N2</strain>
    </source>
</reference>
<sequence>MFSVPFLTSLTSHLGITAIDDASDTLSCLITAFLFITAAILTSAKTYVGSAMECWLPQTYSGDWGEFAENYCFLKDTYFYPRQQSMTDIPMYHKERHRLTYYQWSSMYLAVAGIAFMIPKFLWRLSQSTTDMPVVYFCDTANEIKNETEDKRSAKIKEMARFMRTKITSVHTPSLFSFIRMYMVYSVIKILYLVNAIAQFVIIAIFLGQKRNLFWGWTLFMNLLNGITWETTGLFPRVTFCDFQVREMAGNNRDETVECVIGINEFNEKIFLFFWFWLVFLVFSTLIAHFYNAAQIVKPYFIHSLLFAIRDHDIVDQKELFREFGEKYLTMDGKLILSFVKSQSDLVASEVAVEMYSDFLEARDRANIAEDKYNNILKNGKQ</sequence>
<feature type="chain" id="PRO_0000208510" description="Innexin-8">
    <location>
        <begin position="1"/>
        <end position="382"/>
    </location>
</feature>
<feature type="transmembrane region" description="Helical" evidence="3">
    <location>
        <begin position="29"/>
        <end position="49"/>
    </location>
</feature>
<feature type="transmembrane region" description="Helical" evidence="3">
    <location>
        <begin position="103"/>
        <end position="123"/>
    </location>
</feature>
<feature type="transmembrane region" description="Helical" evidence="3">
    <location>
        <begin position="187"/>
        <end position="207"/>
    </location>
</feature>
<feature type="transmembrane region" description="Helical" evidence="3">
    <location>
        <begin position="270"/>
        <end position="290"/>
    </location>
</feature>
<name>INX8_CAEEL</name>
<organism>
    <name type="scientific">Caenorhabditis elegans</name>
    <dbReference type="NCBI Taxonomy" id="6239"/>
    <lineage>
        <taxon>Eukaryota</taxon>
        <taxon>Metazoa</taxon>
        <taxon>Ecdysozoa</taxon>
        <taxon>Nematoda</taxon>
        <taxon>Chromadorea</taxon>
        <taxon>Rhabditida</taxon>
        <taxon>Rhabditina</taxon>
        <taxon>Rhabditomorpha</taxon>
        <taxon>Rhabditoidea</taxon>
        <taxon>Rhabditidae</taxon>
        <taxon>Peloderinae</taxon>
        <taxon>Caenorhabditis</taxon>
    </lineage>
</organism>
<gene>
    <name type="primary">inx-8</name>
    <name type="synonym">opu-8</name>
    <name type="ORF">ZK792.2</name>
</gene>